<keyword id="KW-0249">Electron transport</keyword>
<keyword id="KW-0349">Heme</keyword>
<keyword id="KW-0408">Iron</keyword>
<keyword id="KW-0472">Membrane</keyword>
<keyword id="KW-0479">Metal-binding</keyword>
<keyword id="KW-0496">Mitochondrion</keyword>
<keyword id="KW-0999">Mitochondrion inner membrane</keyword>
<keyword id="KW-0679">Respiratory chain</keyword>
<keyword id="KW-0812">Transmembrane</keyword>
<keyword id="KW-1133">Transmembrane helix</keyword>
<keyword id="KW-0813">Transport</keyword>
<keyword id="KW-0830">Ubiquinone</keyword>
<name>CYB_VAMCA</name>
<feature type="chain" id="PRO_0000061710" description="Cytochrome b">
    <location>
        <begin position="1"/>
        <end position="379"/>
    </location>
</feature>
<feature type="transmembrane region" description="Helical" evidence="2">
    <location>
        <begin position="33"/>
        <end position="53"/>
    </location>
</feature>
<feature type="transmembrane region" description="Helical" evidence="2">
    <location>
        <begin position="77"/>
        <end position="98"/>
    </location>
</feature>
<feature type="transmembrane region" description="Helical" evidence="2">
    <location>
        <begin position="113"/>
        <end position="133"/>
    </location>
</feature>
<feature type="transmembrane region" description="Helical" evidence="2">
    <location>
        <begin position="178"/>
        <end position="198"/>
    </location>
</feature>
<feature type="transmembrane region" description="Helical" evidence="2">
    <location>
        <begin position="226"/>
        <end position="246"/>
    </location>
</feature>
<feature type="transmembrane region" description="Helical" evidence="2">
    <location>
        <begin position="288"/>
        <end position="308"/>
    </location>
</feature>
<feature type="transmembrane region" description="Helical" evidence="2">
    <location>
        <begin position="320"/>
        <end position="340"/>
    </location>
</feature>
<feature type="transmembrane region" description="Helical" evidence="2">
    <location>
        <begin position="347"/>
        <end position="367"/>
    </location>
</feature>
<feature type="binding site" description="axial binding residue" evidence="2">
    <location>
        <position position="83"/>
    </location>
    <ligand>
        <name>heme b</name>
        <dbReference type="ChEBI" id="CHEBI:60344"/>
        <label>b562</label>
    </ligand>
    <ligandPart>
        <name>Fe</name>
        <dbReference type="ChEBI" id="CHEBI:18248"/>
    </ligandPart>
</feature>
<feature type="binding site" description="axial binding residue" evidence="2">
    <location>
        <position position="97"/>
    </location>
    <ligand>
        <name>heme b</name>
        <dbReference type="ChEBI" id="CHEBI:60344"/>
        <label>b566</label>
    </ligand>
    <ligandPart>
        <name>Fe</name>
        <dbReference type="ChEBI" id="CHEBI:18248"/>
    </ligandPart>
</feature>
<feature type="binding site" description="axial binding residue" evidence="2">
    <location>
        <position position="182"/>
    </location>
    <ligand>
        <name>heme b</name>
        <dbReference type="ChEBI" id="CHEBI:60344"/>
        <label>b562</label>
    </ligand>
    <ligandPart>
        <name>Fe</name>
        <dbReference type="ChEBI" id="CHEBI:18248"/>
    </ligandPart>
</feature>
<feature type="binding site" description="axial binding residue" evidence="2">
    <location>
        <position position="196"/>
    </location>
    <ligand>
        <name>heme b</name>
        <dbReference type="ChEBI" id="CHEBI:60344"/>
        <label>b566</label>
    </ligand>
    <ligandPart>
        <name>Fe</name>
        <dbReference type="ChEBI" id="CHEBI:18248"/>
    </ligandPart>
</feature>
<feature type="binding site" evidence="2">
    <location>
        <position position="201"/>
    </location>
    <ligand>
        <name>a ubiquinone</name>
        <dbReference type="ChEBI" id="CHEBI:16389"/>
    </ligand>
</feature>
<reference key="1">
    <citation type="journal article" date="2004" name="J. Mammal.">
        <title>Systematics of Vampyressa and related genera of phyllostomid bats as determined by cytochrome-b sequences.</title>
        <authorList>
            <person name="Porter C.A."/>
            <person name="Baker R.J."/>
        </authorList>
    </citation>
    <scope>NUCLEOTIDE SEQUENCE [GENOMIC DNA]</scope>
</reference>
<dbReference type="EMBL" id="AY157034">
    <property type="protein sequence ID" value="AAO16530.1"/>
    <property type="molecule type" value="Genomic_DNA"/>
</dbReference>
<dbReference type="SMR" id="Q6YDL6"/>
<dbReference type="GO" id="GO:0005743">
    <property type="term" value="C:mitochondrial inner membrane"/>
    <property type="evidence" value="ECO:0007669"/>
    <property type="project" value="UniProtKB-SubCell"/>
</dbReference>
<dbReference type="GO" id="GO:0045275">
    <property type="term" value="C:respiratory chain complex III"/>
    <property type="evidence" value="ECO:0007669"/>
    <property type="project" value="InterPro"/>
</dbReference>
<dbReference type="GO" id="GO:0046872">
    <property type="term" value="F:metal ion binding"/>
    <property type="evidence" value="ECO:0007669"/>
    <property type="project" value="UniProtKB-KW"/>
</dbReference>
<dbReference type="GO" id="GO:0008121">
    <property type="term" value="F:ubiquinol-cytochrome-c reductase activity"/>
    <property type="evidence" value="ECO:0007669"/>
    <property type="project" value="InterPro"/>
</dbReference>
<dbReference type="GO" id="GO:0006122">
    <property type="term" value="P:mitochondrial electron transport, ubiquinol to cytochrome c"/>
    <property type="evidence" value="ECO:0007669"/>
    <property type="project" value="TreeGrafter"/>
</dbReference>
<dbReference type="CDD" id="cd00290">
    <property type="entry name" value="cytochrome_b_C"/>
    <property type="match status" value="1"/>
</dbReference>
<dbReference type="CDD" id="cd00284">
    <property type="entry name" value="Cytochrome_b_N"/>
    <property type="match status" value="1"/>
</dbReference>
<dbReference type="FunFam" id="1.20.810.10:FF:000002">
    <property type="entry name" value="Cytochrome b"/>
    <property type="match status" value="1"/>
</dbReference>
<dbReference type="Gene3D" id="1.20.810.10">
    <property type="entry name" value="Cytochrome Bc1 Complex, Chain C"/>
    <property type="match status" value="1"/>
</dbReference>
<dbReference type="InterPro" id="IPR005798">
    <property type="entry name" value="Cyt_b/b6_C"/>
</dbReference>
<dbReference type="InterPro" id="IPR036150">
    <property type="entry name" value="Cyt_b/b6_C_sf"/>
</dbReference>
<dbReference type="InterPro" id="IPR005797">
    <property type="entry name" value="Cyt_b/b6_N"/>
</dbReference>
<dbReference type="InterPro" id="IPR027387">
    <property type="entry name" value="Cytb/b6-like_sf"/>
</dbReference>
<dbReference type="InterPro" id="IPR030689">
    <property type="entry name" value="Cytochrome_b"/>
</dbReference>
<dbReference type="InterPro" id="IPR048260">
    <property type="entry name" value="Cytochrome_b_C_euk/bac"/>
</dbReference>
<dbReference type="InterPro" id="IPR048259">
    <property type="entry name" value="Cytochrome_b_N_euk/bac"/>
</dbReference>
<dbReference type="InterPro" id="IPR016174">
    <property type="entry name" value="Di-haem_cyt_TM"/>
</dbReference>
<dbReference type="PANTHER" id="PTHR19271">
    <property type="entry name" value="CYTOCHROME B"/>
    <property type="match status" value="1"/>
</dbReference>
<dbReference type="PANTHER" id="PTHR19271:SF16">
    <property type="entry name" value="CYTOCHROME B"/>
    <property type="match status" value="1"/>
</dbReference>
<dbReference type="Pfam" id="PF00032">
    <property type="entry name" value="Cytochrom_B_C"/>
    <property type="match status" value="1"/>
</dbReference>
<dbReference type="Pfam" id="PF00033">
    <property type="entry name" value="Cytochrome_B"/>
    <property type="match status" value="1"/>
</dbReference>
<dbReference type="PIRSF" id="PIRSF038885">
    <property type="entry name" value="COB"/>
    <property type="match status" value="1"/>
</dbReference>
<dbReference type="SUPFAM" id="SSF81648">
    <property type="entry name" value="a domain/subunit of cytochrome bc1 complex (Ubiquinol-cytochrome c reductase)"/>
    <property type="match status" value="1"/>
</dbReference>
<dbReference type="SUPFAM" id="SSF81342">
    <property type="entry name" value="Transmembrane di-heme cytochromes"/>
    <property type="match status" value="1"/>
</dbReference>
<dbReference type="PROSITE" id="PS51003">
    <property type="entry name" value="CYTB_CTER"/>
    <property type="match status" value="1"/>
</dbReference>
<dbReference type="PROSITE" id="PS51002">
    <property type="entry name" value="CYTB_NTER"/>
    <property type="match status" value="1"/>
</dbReference>
<gene>
    <name type="primary">MT-CYB</name>
    <name type="synonym">COB</name>
    <name type="synonym">CYTB</name>
    <name type="synonym">MTCYB</name>
</gene>
<evidence type="ECO:0000250" key="1"/>
<evidence type="ECO:0000250" key="2">
    <source>
        <dbReference type="UniProtKB" id="P00157"/>
    </source>
</evidence>
<evidence type="ECO:0000255" key="3">
    <source>
        <dbReference type="PROSITE-ProRule" id="PRU00967"/>
    </source>
</evidence>
<evidence type="ECO:0000255" key="4">
    <source>
        <dbReference type="PROSITE-ProRule" id="PRU00968"/>
    </source>
</evidence>
<sequence length="379" mass="42667">MTNIRKTHPLLKIINSSFVDLPAPSSLSSWWNFGSLLGVCLGVQILTGLFLAMHYTSDTATAFNSVTHICRDVNYGWLLRYLHANGASMFFICLYLHVGRGLYYGSYTYSETWNIGILLLFAVMATAFMGYVLPWGQMSFWGATVITNLLSAIPYIGTDLVQWIWGGFSVDKATLTRFFAFHFLLPFIVAALVMVHLLFLHETGSNNPTGIPSDPDMIPFHPYYTIKDILGFLVMLTALSALVLFSPDLLGDPDNYIPANPLNTPPHIKPEWYFLFAYAILRSIPNKLGGVLALVASILILAIIPILHTSKQRSMMFRPLSQYLFWLLVATLFTLTWIGGQPVEHPYIIIGQTASILYFLIILVFMPTISIMENYLLKW</sequence>
<geneLocation type="mitochondrion"/>
<proteinExistence type="inferred from homology"/>
<comment type="function">
    <text evidence="2">Component of the ubiquinol-cytochrome c reductase complex (complex III or cytochrome b-c1 complex) that is part of the mitochondrial respiratory chain. The b-c1 complex mediates electron transfer from ubiquinol to cytochrome c. Contributes to the generation of a proton gradient across the mitochondrial membrane that is then used for ATP synthesis.</text>
</comment>
<comment type="cofactor">
    <cofactor evidence="2">
        <name>heme b</name>
        <dbReference type="ChEBI" id="CHEBI:60344"/>
    </cofactor>
    <text evidence="2">Binds 2 heme b groups non-covalently.</text>
</comment>
<comment type="subunit">
    <text evidence="2">The cytochrome bc1 complex contains 11 subunits: 3 respiratory subunits (MT-CYB, CYC1 and UQCRFS1), 2 core proteins (UQCRC1 and UQCRC2) and 6 low-molecular weight proteins (UQCRH/QCR6, UQCRB/QCR7, UQCRQ/QCR8, UQCR10/QCR9, UQCR11/QCR10 and a cleavage product of UQCRFS1). This cytochrome bc1 complex then forms a dimer.</text>
</comment>
<comment type="subcellular location">
    <subcellularLocation>
        <location evidence="2">Mitochondrion inner membrane</location>
        <topology evidence="2">Multi-pass membrane protein</topology>
    </subcellularLocation>
</comment>
<comment type="miscellaneous">
    <text evidence="1">Heme 1 (or BL or b562) is low-potential and absorbs at about 562 nm, and heme 2 (or BH or b566) is high-potential and absorbs at about 566 nm.</text>
</comment>
<comment type="similarity">
    <text evidence="3 4">Belongs to the cytochrome b family.</text>
</comment>
<comment type="caution">
    <text evidence="2">The full-length protein contains only eight transmembrane helices, not nine as predicted by bioinformatics tools.</text>
</comment>
<accession>Q6YDL6</accession>
<protein>
    <recommendedName>
        <fullName>Cytochrome b</fullName>
    </recommendedName>
    <alternativeName>
        <fullName>Complex III subunit 3</fullName>
    </alternativeName>
    <alternativeName>
        <fullName>Complex III subunit III</fullName>
    </alternativeName>
    <alternativeName>
        <fullName>Cytochrome b-c1 complex subunit 3</fullName>
    </alternativeName>
    <alternativeName>
        <fullName>Ubiquinol-cytochrome-c reductase complex cytochrome b subunit</fullName>
    </alternativeName>
</protein>
<organism>
    <name type="scientific">Vampyrodes caraccioli</name>
    <name type="common">Great stripe-faced bat</name>
    <dbReference type="NCBI Taxonomy" id="148041"/>
    <lineage>
        <taxon>Eukaryota</taxon>
        <taxon>Metazoa</taxon>
        <taxon>Chordata</taxon>
        <taxon>Craniata</taxon>
        <taxon>Vertebrata</taxon>
        <taxon>Euteleostomi</taxon>
        <taxon>Mammalia</taxon>
        <taxon>Eutheria</taxon>
        <taxon>Laurasiatheria</taxon>
        <taxon>Chiroptera</taxon>
        <taxon>Yangochiroptera</taxon>
        <taxon>Phyllostomidae</taxon>
        <taxon>Stenodermatinae</taxon>
        <taxon>Vampyrodes</taxon>
    </lineage>
</organism>